<dbReference type="EMBL" id="CP001164">
    <property type="protein sequence ID" value="ACI37464.1"/>
    <property type="molecule type" value="Genomic_DNA"/>
</dbReference>
<dbReference type="RefSeq" id="WP_000667528.1">
    <property type="nucleotide sequence ID" value="NC_011353.1"/>
</dbReference>
<dbReference type="SMR" id="B5YUD4"/>
<dbReference type="KEGG" id="ecf:ECH74115_3016"/>
<dbReference type="HOGENOM" id="CLU_002755_1_2_6"/>
<dbReference type="GO" id="GO:0005886">
    <property type="term" value="C:plasma membrane"/>
    <property type="evidence" value="ECO:0007669"/>
    <property type="project" value="UniProtKB-SubCell"/>
</dbReference>
<dbReference type="GO" id="GO:0042910">
    <property type="term" value="F:xenobiotic transmembrane transporter activity"/>
    <property type="evidence" value="ECO:0007669"/>
    <property type="project" value="TreeGrafter"/>
</dbReference>
<dbReference type="FunFam" id="1.20.1640.10:FF:000001">
    <property type="entry name" value="Efflux pump membrane transporter"/>
    <property type="match status" value="1"/>
</dbReference>
<dbReference type="FunFam" id="3.30.70.1430:FF:000001">
    <property type="entry name" value="Efflux pump membrane transporter"/>
    <property type="match status" value="1"/>
</dbReference>
<dbReference type="FunFam" id="3.30.2090.10:FF:000004">
    <property type="entry name" value="Multidrug resistance protein MdtC"/>
    <property type="match status" value="1"/>
</dbReference>
<dbReference type="FunFam" id="3.30.2090.10:FF:000005">
    <property type="entry name" value="Multidrug resistance protein MdtC"/>
    <property type="match status" value="1"/>
</dbReference>
<dbReference type="FunFam" id="3.30.70.1430:FF:000004">
    <property type="entry name" value="Multidrug resistance protein MdtC"/>
    <property type="match status" value="1"/>
</dbReference>
<dbReference type="Gene3D" id="3.30.70.1430">
    <property type="entry name" value="Multidrug efflux transporter AcrB pore domain"/>
    <property type="match status" value="2"/>
</dbReference>
<dbReference type="Gene3D" id="3.30.70.1440">
    <property type="entry name" value="Multidrug efflux transporter AcrB pore domain"/>
    <property type="match status" value="1"/>
</dbReference>
<dbReference type="Gene3D" id="3.30.70.1320">
    <property type="entry name" value="Multidrug efflux transporter AcrB pore domain like"/>
    <property type="match status" value="1"/>
</dbReference>
<dbReference type="Gene3D" id="3.30.2090.10">
    <property type="entry name" value="Multidrug efflux transporter AcrB TolC docking domain, DN and DC subdomains"/>
    <property type="match status" value="2"/>
</dbReference>
<dbReference type="Gene3D" id="1.20.1640.10">
    <property type="entry name" value="Multidrug efflux transporter AcrB transmembrane domain"/>
    <property type="match status" value="2"/>
</dbReference>
<dbReference type="HAMAP" id="MF_01424">
    <property type="entry name" value="MdtC"/>
    <property type="match status" value="1"/>
</dbReference>
<dbReference type="InterPro" id="IPR027463">
    <property type="entry name" value="AcrB_DN_DC_subdom"/>
</dbReference>
<dbReference type="InterPro" id="IPR001036">
    <property type="entry name" value="Acrflvin-R"/>
</dbReference>
<dbReference type="InterPro" id="IPR023931">
    <property type="entry name" value="Multidrug-R_MdtC"/>
</dbReference>
<dbReference type="NCBIfam" id="NF007905">
    <property type="entry name" value="PRK10614.1"/>
    <property type="match status" value="1"/>
</dbReference>
<dbReference type="NCBIfam" id="NF033617">
    <property type="entry name" value="RND_permease_2"/>
    <property type="match status" value="1"/>
</dbReference>
<dbReference type="PANTHER" id="PTHR32063">
    <property type="match status" value="1"/>
</dbReference>
<dbReference type="PANTHER" id="PTHR32063:SF34">
    <property type="entry name" value="MULTIDRUG RESISTANCE PROTEIN MDTC"/>
    <property type="match status" value="1"/>
</dbReference>
<dbReference type="Pfam" id="PF00873">
    <property type="entry name" value="ACR_tran"/>
    <property type="match status" value="1"/>
</dbReference>
<dbReference type="PRINTS" id="PR00702">
    <property type="entry name" value="ACRIFLAVINRP"/>
</dbReference>
<dbReference type="SUPFAM" id="SSF82693">
    <property type="entry name" value="Multidrug efflux transporter AcrB pore domain, PN1, PN2, PC1 and PC2 subdomains"/>
    <property type="match status" value="4"/>
</dbReference>
<dbReference type="SUPFAM" id="SSF82714">
    <property type="entry name" value="Multidrug efflux transporter AcrB TolC docking domain, DN and DC subdomains"/>
    <property type="match status" value="2"/>
</dbReference>
<dbReference type="SUPFAM" id="SSF82866">
    <property type="entry name" value="Multidrug efflux transporter AcrB transmembrane domain"/>
    <property type="match status" value="2"/>
</dbReference>
<feature type="chain" id="PRO_1000145667" description="Multidrug resistance protein MdtC">
    <location>
        <begin position="1"/>
        <end position="1025"/>
    </location>
</feature>
<feature type="transmembrane region" description="Helical" evidence="1">
    <location>
        <begin position="3"/>
        <end position="23"/>
    </location>
</feature>
<feature type="transmembrane region" description="Helical" evidence="1">
    <location>
        <begin position="333"/>
        <end position="353"/>
    </location>
</feature>
<feature type="transmembrane region" description="Helical" evidence="1">
    <location>
        <begin position="360"/>
        <end position="380"/>
    </location>
</feature>
<feature type="transmembrane region" description="Helical" evidence="1">
    <location>
        <begin position="387"/>
        <end position="407"/>
    </location>
</feature>
<feature type="transmembrane region" description="Helical" evidence="1">
    <location>
        <begin position="431"/>
        <end position="451"/>
    </location>
</feature>
<feature type="transmembrane region" description="Helical" evidence="1">
    <location>
        <begin position="463"/>
        <end position="483"/>
    </location>
</feature>
<feature type="transmembrane region" description="Helical" evidence="1">
    <location>
        <begin position="528"/>
        <end position="548"/>
    </location>
</feature>
<feature type="transmembrane region" description="Helical" evidence="1">
    <location>
        <begin position="853"/>
        <end position="873"/>
    </location>
</feature>
<feature type="transmembrane region" description="Helical" evidence="1">
    <location>
        <begin position="875"/>
        <end position="895"/>
    </location>
</feature>
<feature type="transmembrane region" description="Helical" evidence="1">
    <location>
        <begin position="897"/>
        <end position="917"/>
    </location>
</feature>
<feature type="transmembrane region" description="Helical" evidence="1">
    <location>
        <begin position="953"/>
        <end position="973"/>
    </location>
</feature>
<feature type="transmembrane region" description="Helical" evidence="1">
    <location>
        <begin position="984"/>
        <end position="1004"/>
    </location>
</feature>
<comment type="function">
    <text evidence="1">The MdtABC tripartite complex confers resistance against novobiocin and deoxycholate.</text>
</comment>
<comment type="subunit">
    <text evidence="1">Part of a tripartite efflux system composed of MdtA, MdtB and MdtC. MdtC forms a heteromultimer with MdtB.</text>
</comment>
<comment type="subcellular location">
    <subcellularLocation>
        <location evidence="1">Cell inner membrane</location>
        <topology evidence="1">Multi-pass membrane protein</topology>
    </subcellularLocation>
</comment>
<comment type="induction">
    <text>The mdtABC operon is transcriptionally activated by BaeR.</text>
</comment>
<comment type="similarity">
    <text evidence="1">Belongs to the resistance-nodulation-cell division (RND) (TC 2.A.6) family. MdtC subfamily.</text>
</comment>
<name>MDTC_ECO5E</name>
<gene>
    <name evidence="1" type="primary">mdtC</name>
    <name type="ordered locus">ECH74115_3016</name>
</gene>
<organism>
    <name type="scientific">Escherichia coli O157:H7 (strain EC4115 / EHEC)</name>
    <dbReference type="NCBI Taxonomy" id="444450"/>
    <lineage>
        <taxon>Bacteria</taxon>
        <taxon>Pseudomonadati</taxon>
        <taxon>Pseudomonadota</taxon>
        <taxon>Gammaproteobacteria</taxon>
        <taxon>Enterobacterales</taxon>
        <taxon>Enterobacteriaceae</taxon>
        <taxon>Escherichia</taxon>
    </lineage>
</organism>
<accession>B5YUD4</accession>
<reference key="1">
    <citation type="journal article" date="2011" name="Proc. Natl. Acad. Sci. U.S.A.">
        <title>Genomic anatomy of Escherichia coli O157:H7 outbreaks.</title>
        <authorList>
            <person name="Eppinger M."/>
            <person name="Mammel M.K."/>
            <person name="Leclerc J.E."/>
            <person name="Ravel J."/>
            <person name="Cebula T.A."/>
        </authorList>
    </citation>
    <scope>NUCLEOTIDE SEQUENCE [LARGE SCALE GENOMIC DNA]</scope>
    <source>
        <strain>EC4115 / EHEC</strain>
    </source>
</reference>
<sequence>MKFFALFIYRPVATILLSVAITLCGILGFRMLPVAPLPQVDFPVIMVSASLPGASPETMASSVATPLERSLGRIAGVSEMTSSSSLGSTRIILQFDFDRDINGAARDVQAAINAAQSLLPSGMPSRPTYRKANPSDAPIMILTLTSDTYSQGELYDFASTQLAPTISQIDGVGDVDVGGSSLPAVRVGLNPQALFNQGVSLDDVRTAISNANVRKPQGALEDGTHRWQIQTNDELKTAAEYQPLIIHYNNGGAVRLGDVATVTDSVQDVRNAGMTNAKPAILLMIRKLPEANIIQTVDSIRAKLPELQETIPAAIDLQIAQDRSPTIRASLEEVEQTLIISVALVILVVFLFLRSGRATIIPAVAVPVSLIGTFAAMYLCGFSLNNLSLMALTIATGFVVDDAIVVLENIARHLEAGMKPLQAALQGTREVGFTVLSMSLSLVAVFLPLLLMGGLPGRLLREFAVTLSVAIGISLLVSLTLTPMMCGWMLKASKPREQKRLRGFGRMLVALQQGYGKSLKWVLNHTRLVGMVLLGTIALNIWLYISIPKTFFPEQDTGVLMGGIQADQSISFQAMRGKLQDFMKIIRDDPAVDNVTGFTGGSRVNSGMMFITLKPRDERSETAQQIIDRLRVKLAKEPGANLFLMAVQDIRVGGRQSNASYQYTLLSDDLAALREWEPKIRKKLATLPELADVNSDQQDNGAEMNLVYDRDTMARLGIDVQAANSLLNNAFGQRQISTIYQPMNQYKVVMEVDPRYTQDISALEKMFVINNEGKAIPLSYFAKWQPANAPLSVNHQGLSAASTISFNLPTGKSLSDASAAIDRAMTQLGVPSTVRGSFAGTAQVFQETMNSQVILIIAAIATVYIVLGILYESYVHPLTILSTLPSAGVGALLALELFNAPFSLIALIGIMLLIGIVKKNAIMMVDFALEAQRHGNLTPQEAIFQACLLRFRPIMMTTLAALFGALPLVLSGGDGSELRQPLGITIVGGLVMSQLLTLYTTPVVYLFFDRLRLRFSRKSKQTVTE</sequence>
<protein>
    <recommendedName>
        <fullName evidence="1">Multidrug resistance protein MdtC</fullName>
    </recommendedName>
    <alternativeName>
        <fullName evidence="1">Multidrug transporter MdtC</fullName>
    </alternativeName>
</protein>
<evidence type="ECO:0000255" key="1">
    <source>
        <dbReference type="HAMAP-Rule" id="MF_01424"/>
    </source>
</evidence>
<proteinExistence type="evidence at transcript level"/>
<keyword id="KW-0997">Cell inner membrane</keyword>
<keyword id="KW-1003">Cell membrane</keyword>
<keyword id="KW-0472">Membrane</keyword>
<keyword id="KW-0812">Transmembrane</keyword>
<keyword id="KW-1133">Transmembrane helix</keyword>
<keyword id="KW-0813">Transport</keyword>